<protein>
    <recommendedName>
        <fullName>Cytochrome b</fullName>
    </recommendedName>
    <alternativeName>
        <fullName>Complex III subunit 3</fullName>
    </alternativeName>
    <alternativeName>
        <fullName>Complex III subunit III</fullName>
    </alternativeName>
    <alternativeName>
        <fullName>Cytochrome b-c1 complex subunit 3</fullName>
    </alternativeName>
    <alternativeName>
        <fullName>Ubiquinol-cytochrome-c reductase complex cytochrome b subunit</fullName>
    </alternativeName>
</protein>
<proteinExistence type="inferred from homology"/>
<organism>
    <name type="scientific">Arabitragus jayakari</name>
    <name type="common">Arabian tahr</name>
    <name type="synonym">Hemitragus jayakari</name>
    <dbReference type="NCBI Taxonomy" id="330465"/>
    <lineage>
        <taxon>Eukaryota</taxon>
        <taxon>Metazoa</taxon>
        <taxon>Chordata</taxon>
        <taxon>Craniata</taxon>
        <taxon>Vertebrata</taxon>
        <taxon>Euteleostomi</taxon>
        <taxon>Mammalia</taxon>
        <taxon>Eutheria</taxon>
        <taxon>Laurasiatheria</taxon>
        <taxon>Artiodactyla</taxon>
        <taxon>Ruminantia</taxon>
        <taxon>Pecora</taxon>
        <taxon>Bovidae</taxon>
        <taxon>Caprinae</taxon>
        <taxon>Arabitragus</taxon>
    </lineage>
</organism>
<reference key="1">
    <citation type="journal article" date="2005" name="Mol. Phylogenet. Evol.">
        <title>Molecular evidence for the polyphyly of the genus Hemitragus (Mammalia, Bovidae).</title>
        <authorList>
            <person name="Ropiquet A."/>
            <person name="Hassanin A."/>
        </authorList>
    </citation>
    <scope>NUCLEOTIDE SEQUENCE [GENOMIC DNA]</scope>
</reference>
<evidence type="ECO:0000250" key="1"/>
<evidence type="ECO:0000250" key="2">
    <source>
        <dbReference type="UniProtKB" id="P00157"/>
    </source>
</evidence>
<evidence type="ECO:0000255" key="3">
    <source>
        <dbReference type="PROSITE-ProRule" id="PRU00967"/>
    </source>
</evidence>
<evidence type="ECO:0000255" key="4">
    <source>
        <dbReference type="PROSITE-ProRule" id="PRU00968"/>
    </source>
</evidence>
<accession>Q4VKI7</accession>
<gene>
    <name type="primary">MT-CYB</name>
    <name type="synonym">COB</name>
    <name type="synonym">CYTB</name>
    <name type="synonym">MTCYB</name>
</gene>
<feature type="chain" id="PRO_0000061029" description="Cytochrome b">
    <location>
        <begin position="1"/>
        <end position="379"/>
    </location>
</feature>
<feature type="transmembrane region" description="Helical" evidence="2">
    <location>
        <begin position="33"/>
        <end position="53"/>
    </location>
</feature>
<feature type="transmembrane region" description="Helical" evidence="2">
    <location>
        <begin position="77"/>
        <end position="98"/>
    </location>
</feature>
<feature type="transmembrane region" description="Helical" evidence="2">
    <location>
        <begin position="113"/>
        <end position="133"/>
    </location>
</feature>
<feature type="transmembrane region" description="Helical" evidence="2">
    <location>
        <begin position="178"/>
        <end position="198"/>
    </location>
</feature>
<feature type="transmembrane region" description="Helical" evidence="2">
    <location>
        <begin position="226"/>
        <end position="246"/>
    </location>
</feature>
<feature type="transmembrane region" description="Helical" evidence="2">
    <location>
        <begin position="288"/>
        <end position="308"/>
    </location>
</feature>
<feature type="transmembrane region" description="Helical" evidence="2">
    <location>
        <begin position="320"/>
        <end position="340"/>
    </location>
</feature>
<feature type="transmembrane region" description="Helical" evidence="2">
    <location>
        <begin position="347"/>
        <end position="367"/>
    </location>
</feature>
<feature type="binding site" description="axial binding residue" evidence="2">
    <location>
        <position position="83"/>
    </location>
    <ligand>
        <name>heme b</name>
        <dbReference type="ChEBI" id="CHEBI:60344"/>
        <label>b562</label>
    </ligand>
    <ligandPart>
        <name>Fe</name>
        <dbReference type="ChEBI" id="CHEBI:18248"/>
    </ligandPart>
</feature>
<feature type="binding site" description="axial binding residue" evidence="2">
    <location>
        <position position="97"/>
    </location>
    <ligand>
        <name>heme b</name>
        <dbReference type="ChEBI" id="CHEBI:60344"/>
        <label>b566</label>
    </ligand>
    <ligandPart>
        <name>Fe</name>
        <dbReference type="ChEBI" id="CHEBI:18248"/>
    </ligandPart>
</feature>
<feature type="binding site" description="axial binding residue" evidence="2">
    <location>
        <position position="182"/>
    </location>
    <ligand>
        <name>heme b</name>
        <dbReference type="ChEBI" id="CHEBI:60344"/>
        <label>b562</label>
    </ligand>
    <ligandPart>
        <name>Fe</name>
        <dbReference type="ChEBI" id="CHEBI:18248"/>
    </ligandPart>
</feature>
<feature type="binding site" description="axial binding residue" evidence="2">
    <location>
        <position position="196"/>
    </location>
    <ligand>
        <name>heme b</name>
        <dbReference type="ChEBI" id="CHEBI:60344"/>
        <label>b566</label>
    </ligand>
    <ligandPart>
        <name>Fe</name>
        <dbReference type="ChEBI" id="CHEBI:18248"/>
    </ligandPart>
</feature>
<feature type="binding site" evidence="2">
    <location>
        <position position="201"/>
    </location>
    <ligand>
        <name>a ubiquinone</name>
        <dbReference type="ChEBI" id="CHEBI:16389"/>
    </ligand>
</feature>
<dbReference type="EMBL" id="AY846791">
    <property type="protein sequence ID" value="AAY54241.1"/>
    <property type="molecule type" value="Genomic_DNA"/>
</dbReference>
<dbReference type="GO" id="GO:0005743">
    <property type="term" value="C:mitochondrial inner membrane"/>
    <property type="evidence" value="ECO:0007669"/>
    <property type="project" value="UniProtKB-SubCell"/>
</dbReference>
<dbReference type="GO" id="GO:0045275">
    <property type="term" value="C:respiratory chain complex III"/>
    <property type="evidence" value="ECO:0007669"/>
    <property type="project" value="InterPro"/>
</dbReference>
<dbReference type="GO" id="GO:0046872">
    <property type="term" value="F:metal ion binding"/>
    <property type="evidence" value="ECO:0007669"/>
    <property type="project" value="UniProtKB-KW"/>
</dbReference>
<dbReference type="GO" id="GO:0008121">
    <property type="term" value="F:ubiquinol-cytochrome-c reductase activity"/>
    <property type="evidence" value="ECO:0007669"/>
    <property type="project" value="InterPro"/>
</dbReference>
<dbReference type="GO" id="GO:0006122">
    <property type="term" value="P:mitochondrial electron transport, ubiquinol to cytochrome c"/>
    <property type="evidence" value="ECO:0007669"/>
    <property type="project" value="TreeGrafter"/>
</dbReference>
<dbReference type="CDD" id="cd00290">
    <property type="entry name" value="cytochrome_b_C"/>
    <property type="match status" value="1"/>
</dbReference>
<dbReference type="CDD" id="cd00284">
    <property type="entry name" value="Cytochrome_b_N"/>
    <property type="match status" value="1"/>
</dbReference>
<dbReference type="FunFam" id="1.20.810.10:FF:000002">
    <property type="entry name" value="Cytochrome b"/>
    <property type="match status" value="1"/>
</dbReference>
<dbReference type="Gene3D" id="1.20.810.10">
    <property type="entry name" value="Cytochrome Bc1 Complex, Chain C"/>
    <property type="match status" value="1"/>
</dbReference>
<dbReference type="InterPro" id="IPR005798">
    <property type="entry name" value="Cyt_b/b6_C"/>
</dbReference>
<dbReference type="InterPro" id="IPR036150">
    <property type="entry name" value="Cyt_b/b6_C_sf"/>
</dbReference>
<dbReference type="InterPro" id="IPR005797">
    <property type="entry name" value="Cyt_b/b6_N"/>
</dbReference>
<dbReference type="InterPro" id="IPR027387">
    <property type="entry name" value="Cytb/b6-like_sf"/>
</dbReference>
<dbReference type="InterPro" id="IPR030689">
    <property type="entry name" value="Cytochrome_b"/>
</dbReference>
<dbReference type="InterPro" id="IPR048260">
    <property type="entry name" value="Cytochrome_b_C_euk/bac"/>
</dbReference>
<dbReference type="InterPro" id="IPR048259">
    <property type="entry name" value="Cytochrome_b_N_euk/bac"/>
</dbReference>
<dbReference type="InterPro" id="IPR016174">
    <property type="entry name" value="Di-haem_cyt_TM"/>
</dbReference>
<dbReference type="PANTHER" id="PTHR19271">
    <property type="entry name" value="CYTOCHROME B"/>
    <property type="match status" value="1"/>
</dbReference>
<dbReference type="PANTHER" id="PTHR19271:SF16">
    <property type="entry name" value="CYTOCHROME B"/>
    <property type="match status" value="1"/>
</dbReference>
<dbReference type="Pfam" id="PF00032">
    <property type="entry name" value="Cytochrom_B_C"/>
    <property type="match status" value="1"/>
</dbReference>
<dbReference type="Pfam" id="PF00033">
    <property type="entry name" value="Cytochrome_B"/>
    <property type="match status" value="1"/>
</dbReference>
<dbReference type="PIRSF" id="PIRSF038885">
    <property type="entry name" value="COB"/>
    <property type="match status" value="1"/>
</dbReference>
<dbReference type="SUPFAM" id="SSF81648">
    <property type="entry name" value="a domain/subunit of cytochrome bc1 complex (Ubiquinol-cytochrome c reductase)"/>
    <property type="match status" value="1"/>
</dbReference>
<dbReference type="SUPFAM" id="SSF81342">
    <property type="entry name" value="Transmembrane di-heme cytochromes"/>
    <property type="match status" value="1"/>
</dbReference>
<dbReference type="PROSITE" id="PS51003">
    <property type="entry name" value="CYTB_CTER"/>
    <property type="match status" value="1"/>
</dbReference>
<dbReference type="PROSITE" id="PS51002">
    <property type="entry name" value="CYTB_NTER"/>
    <property type="match status" value="1"/>
</dbReference>
<keyword id="KW-0249">Electron transport</keyword>
<keyword id="KW-0349">Heme</keyword>
<keyword id="KW-0408">Iron</keyword>
<keyword id="KW-0472">Membrane</keyword>
<keyword id="KW-0479">Metal-binding</keyword>
<keyword id="KW-0496">Mitochondrion</keyword>
<keyword id="KW-0999">Mitochondrion inner membrane</keyword>
<keyword id="KW-0679">Respiratory chain</keyword>
<keyword id="KW-0812">Transmembrane</keyword>
<keyword id="KW-1133">Transmembrane helix</keyword>
<keyword id="KW-0813">Transport</keyword>
<keyword id="KW-0830">Ubiquinone</keyword>
<name>CYB_ARAJA</name>
<geneLocation type="mitochondrion"/>
<comment type="function">
    <text evidence="2">Component of the ubiquinol-cytochrome c reductase complex (complex III or cytochrome b-c1 complex) that is part of the mitochondrial respiratory chain. The b-c1 complex mediates electron transfer from ubiquinol to cytochrome c. Contributes to the generation of a proton gradient across the mitochondrial membrane that is then used for ATP synthesis.</text>
</comment>
<comment type="cofactor">
    <cofactor evidence="2">
        <name>heme b</name>
        <dbReference type="ChEBI" id="CHEBI:60344"/>
    </cofactor>
    <text evidence="2">Binds 2 heme b groups non-covalently.</text>
</comment>
<comment type="subunit">
    <text evidence="2">The cytochrome bc1 complex contains 11 subunits: 3 respiratory subunits (MT-CYB, CYC1 and UQCRFS1), 2 core proteins (UQCRC1 and UQCRC2) and 6 low-molecular weight proteins (UQCRH/QCR6, UQCRB/QCR7, UQCRQ/QCR8, UQCR10/QCR9, UQCR11/QCR10 and a cleavage product of UQCRFS1). This cytochrome bc1 complex then forms a dimer.</text>
</comment>
<comment type="subcellular location">
    <subcellularLocation>
        <location evidence="2">Mitochondrion inner membrane</location>
        <topology evidence="2">Multi-pass membrane protein</topology>
    </subcellularLocation>
</comment>
<comment type="miscellaneous">
    <text evidence="1">Heme 1 (or BL or b562) is low-potential and absorbs at about 562 nm, and heme 2 (or BH or b566) is high-potential and absorbs at about 566 nm.</text>
</comment>
<comment type="similarity">
    <text evidence="3 4">Belongs to the cytochrome b family.</text>
</comment>
<comment type="caution">
    <text evidence="2">The full-length protein contains only eight transmembrane helices, not nine as predicted by bioinformatics tools.</text>
</comment>
<sequence length="379" mass="42884">MINIRKTHPLMKIVNNAFIDLPTPSNISSWWNFGSLLGICLILQILTGLFLAMHYTXDTMTAFSSVTHICRDVNYGWIIRYMHANGASMFFICLFMHVGRGLYYGSYTFLETWNMGVILLLTTMATAFMGYVLPWGQMSFWGATVITNLLSAIPYIGTNLVEWIWGGFSVDKATLTRFFAFHFILPFIIAALAMVHLLFLHETGSNNPTGIPSDADKIPFHPYYTIKDILGAMMLILSLMLLVLFTPDLLGDPDNYTPANPLNTPPHIKPEWYFLFAYAILRSIPNKLGGVLAXVLSILILVLVPFLHTSKQRSMMFRPISQCMFWILVADLLTLTWIGGQPVEHPYIXIGQLASIMYFLIILVMMPVASTIENNLLKW</sequence>